<sequence>MKTIDVKILDPRMQEQMPAYATSGSAGLDLRACIEAPITIKPGETHLIPTGLAIHIGNPAYAAVILPRSGMGHKHGIVLGNLVGLIDSDYQGQLMVSTWNRGQAEFVLNPMERLAQLVIVPVLQVGFNIVDDFDSSERGAGGFGSTGKH</sequence>
<keyword id="KW-0378">Hydrolase</keyword>
<keyword id="KW-0460">Magnesium</keyword>
<keyword id="KW-0479">Metal-binding</keyword>
<keyword id="KW-0546">Nucleotide metabolism</keyword>
<keyword id="KW-1185">Reference proteome</keyword>
<name>DUT_HERAR</name>
<gene>
    <name evidence="1" type="primary">dut</name>
    <name type="ordered locus">HEAR0842</name>
</gene>
<protein>
    <recommendedName>
        <fullName evidence="1">Deoxyuridine 5'-triphosphate nucleotidohydrolase</fullName>
        <shortName evidence="1">dUTPase</shortName>
        <ecNumber evidence="1">3.6.1.23</ecNumber>
    </recommendedName>
    <alternativeName>
        <fullName evidence="1">dUTP pyrophosphatase</fullName>
    </alternativeName>
</protein>
<comment type="function">
    <text evidence="1">This enzyme is involved in nucleotide metabolism: it produces dUMP, the immediate precursor of thymidine nucleotides and it decreases the intracellular concentration of dUTP so that uracil cannot be incorporated into DNA.</text>
</comment>
<comment type="catalytic activity">
    <reaction evidence="1">
        <text>dUTP + H2O = dUMP + diphosphate + H(+)</text>
        <dbReference type="Rhea" id="RHEA:10248"/>
        <dbReference type="ChEBI" id="CHEBI:15377"/>
        <dbReference type="ChEBI" id="CHEBI:15378"/>
        <dbReference type="ChEBI" id="CHEBI:33019"/>
        <dbReference type="ChEBI" id="CHEBI:61555"/>
        <dbReference type="ChEBI" id="CHEBI:246422"/>
        <dbReference type="EC" id="3.6.1.23"/>
    </reaction>
</comment>
<comment type="cofactor">
    <cofactor evidence="1">
        <name>Mg(2+)</name>
        <dbReference type="ChEBI" id="CHEBI:18420"/>
    </cofactor>
</comment>
<comment type="pathway">
    <text evidence="1">Pyrimidine metabolism; dUMP biosynthesis; dUMP from dCTP (dUTP route): step 2/2.</text>
</comment>
<comment type="similarity">
    <text evidence="1">Belongs to the dUTPase family.</text>
</comment>
<reference key="1">
    <citation type="journal article" date="2007" name="PLoS Genet.">
        <title>A tale of two oxidation states: bacterial colonization of arsenic-rich environments.</title>
        <authorList>
            <person name="Muller D."/>
            <person name="Medigue C."/>
            <person name="Koechler S."/>
            <person name="Barbe V."/>
            <person name="Barakat M."/>
            <person name="Talla E."/>
            <person name="Bonnefoy V."/>
            <person name="Krin E."/>
            <person name="Arsene-Ploetze F."/>
            <person name="Carapito C."/>
            <person name="Chandler M."/>
            <person name="Cournoyer B."/>
            <person name="Cruveiller S."/>
            <person name="Dossat C."/>
            <person name="Duval S."/>
            <person name="Heymann M."/>
            <person name="Leize E."/>
            <person name="Lieutaud A."/>
            <person name="Lievremont D."/>
            <person name="Makita Y."/>
            <person name="Mangenot S."/>
            <person name="Nitschke W."/>
            <person name="Ortet P."/>
            <person name="Perdrial N."/>
            <person name="Schoepp B."/>
            <person name="Siguier P."/>
            <person name="Simeonova D.D."/>
            <person name="Rouy Z."/>
            <person name="Segurens B."/>
            <person name="Turlin E."/>
            <person name="Vallenet D."/>
            <person name="van Dorsselaer A."/>
            <person name="Weiss S."/>
            <person name="Weissenbach J."/>
            <person name="Lett M.-C."/>
            <person name="Danchin A."/>
            <person name="Bertin P.N."/>
        </authorList>
    </citation>
    <scope>NUCLEOTIDE SEQUENCE [LARGE SCALE GENOMIC DNA]</scope>
    <source>
        <strain>ULPAs1</strain>
    </source>
</reference>
<feature type="chain" id="PRO_1000057774" description="Deoxyuridine 5'-triphosphate nucleotidohydrolase">
    <location>
        <begin position="1"/>
        <end position="149"/>
    </location>
</feature>
<feature type="binding site" evidence="1">
    <location>
        <begin position="68"/>
        <end position="70"/>
    </location>
    <ligand>
        <name>substrate</name>
    </ligand>
</feature>
<feature type="binding site" evidence="1">
    <location>
        <position position="81"/>
    </location>
    <ligand>
        <name>substrate</name>
    </ligand>
</feature>
<feature type="binding site" evidence="1">
    <location>
        <begin position="85"/>
        <end position="87"/>
    </location>
    <ligand>
        <name>substrate</name>
    </ligand>
</feature>
<feature type="binding site" evidence="1">
    <location>
        <position position="95"/>
    </location>
    <ligand>
        <name>substrate</name>
    </ligand>
</feature>
<dbReference type="EC" id="3.6.1.23" evidence="1"/>
<dbReference type="EMBL" id="CU207211">
    <property type="protein sequence ID" value="CAL61030.1"/>
    <property type="molecule type" value="Genomic_DNA"/>
</dbReference>
<dbReference type="SMR" id="A4G3E3"/>
<dbReference type="STRING" id="204773.HEAR0842"/>
<dbReference type="KEGG" id="har:HEAR0842"/>
<dbReference type="eggNOG" id="COG0756">
    <property type="taxonomic scope" value="Bacteria"/>
</dbReference>
<dbReference type="HOGENOM" id="CLU_068508_1_1_4"/>
<dbReference type="OrthoDB" id="9809956at2"/>
<dbReference type="UniPathway" id="UPA00610">
    <property type="reaction ID" value="UER00666"/>
</dbReference>
<dbReference type="Proteomes" id="UP000006697">
    <property type="component" value="Chromosome"/>
</dbReference>
<dbReference type="GO" id="GO:0004170">
    <property type="term" value="F:dUTP diphosphatase activity"/>
    <property type="evidence" value="ECO:0007669"/>
    <property type="project" value="UniProtKB-UniRule"/>
</dbReference>
<dbReference type="GO" id="GO:0000287">
    <property type="term" value="F:magnesium ion binding"/>
    <property type="evidence" value="ECO:0007669"/>
    <property type="project" value="UniProtKB-UniRule"/>
</dbReference>
<dbReference type="GO" id="GO:0006226">
    <property type="term" value="P:dUMP biosynthetic process"/>
    <property type="evidence" value="ECO:0007669"/>
    <property type="project" value="UniProtKB-UniRule"/>
</dbReference>
<dbReference type="GO" id="GO:0046081">
    <property type="term" value="P:dUTP catabolic process"/>
    <property type="evidence" value="ECO:0007669"/>
    <property type="project" value="InterPro"/>
</dbReference>
<dbReference type="CDD" id="cd07557">
    <property type="entry name" value="trimeric_dUTPase"/>
    <property type="match status" value="1"/>
</dbReference>
<dbReference type="FunFam" id="2.70.40.10:FF:000002">
    <property type="entry name" value="dUTP diphosphatase"/>
    <property type="match status" value="1"/>
</dbReference>
<dbReference type="Gene3D" id="2.70.40.10">
    <property type="match status" value="1"/>
</dbReference>
<dbReference type="HAMAP" id="MF_00116">
    <property type="entry name" value="dUTPase_bact"/>
    <property type="match status" value="1"/>
</dbReference>
<dbReference type="InterPro" id="IPR008181">
    <property type="entry name" value="dUTPase"/>
</dbReference>
<dbReference type="InterPro" id="IPR029054">
    <property type="entry name" value="dUTPase-like"/>
</dbReference>
<dbReference type="InterPro" id="IPR036157">
    <property type="entry name" value="dUTPase-like_sf"/>
</dbReference>
<dbReference type="InterPro" id="IPR033704">
    <property type="entry name" value="dUTPase_trimeric"/>
</dbReference>
<dbReference type="NCBIfam" id="TIGR00576">
    <property type="entry name" value="dut"/>
    <property type="match status" value="1"/>
</dbReference>
<dbReference type="NCBIfam" id="NF001862">
    <property type="entry name" value="PRK00601.1"/>
    <property type="match status" value="1"/>
</dbReference>
<dbReference type="PANTHER" id="PTHR11241">
    <property type="entry name" value="DEOXYURIDINE 5'-TRIPHOSPHATE NUCLEOTIDOHYDROLASE"/>
    <property type="match status" value="1"/>
</dbReference>
<dbReference type="PANTHER" id="PTHR11241:SF0">
    <property type="entry name" value="DEOXYURIDINE 5'-TRIPHOSPHATE NUCLEOTIDOHYDROLASE"/>
    <property type="match status" value="1"/>
</dbReference>
<dbReference type="Pfam" id="PF00692">
    <property type="entry name" value="dUTPase"/>
    <property type="match status" value="1"/>
</dbReference>
<dbReference type="SUPFAM" id="SSF51283">
    <property type="entry name" value="dUTPase-like"/>
    <property type="match status" value="1"/>
</dbReference>
<organism>
    <name type="scientific">Herminiimonas arsenicoxydans</name>
    <dbReference type="NCBI Taxonomy" id="204773"/>
    <lineage>
        <taxon>Bacteria</taxon>
        <taxon>Pseudomonadati</taxon>
        <taxon>Pseudomonadota</taxon>
        <taxon>Betaproteobacteria</taxon>
        <taxon>Burkholderiales</taxon>
        <taxon>Oxalobacteraceae</taxon>
        <taxon>Herminiimonas</taxon>
    </lineage>
</organism>
<proteinExistence type="inferred from homology"/>
<evidence type="ECO:0000255" key="1">
    <source>
        <dbReference type="HAMAP-Rule" id="MF_00116"/>
    </source>
</evidence>
<accession>A4G3E3</accession>